<sequence>MRDKIRLNSSAGTGHFYTTDKNKKTMPEKFEIKKFDPVVRKHVMYKEGKIK</sequence>
<dbReference type="EMBL" id="CP000510">
    <property type="protein sequence ID" value="ABM01928.1"/>
    <property type="molecule type" value="Genomic_DNA"/>
</dbReference>
<dbReference type="RefSeq" id="WP_011768487.1">
    <property type="nucleotide sequence ID" value="NC_008709.1"/>
</dbReference>
<dbReference type="SMR" id="A1SR13"/>
<dbReference type="STRING" id="357804.Ping_0054"/>
<dbReference type="KEGG" id="pin:Ping_0054"/>
<dbReference type="eggNOG" id="COG0267">
    <property type="taxonomic scope" value="Bacteria"/>
</dbReference>
<dbReference type="HOGENOM" id="CLU_190949_1_1_6"/>
<dbReference type="OrthoDB" id="21586at2"/>
<dbReference type="Proteomes" id="UP000000639">
    <property type="component" value="Chromosome"/>
</dbReference>
<dbReference type="GO" id="GO:0022625">
    <property type="term" value="C:cytosolic large ribosomal subunit"/>
    <property type="evidence" value="ECO:0007669"/>
    <property type="project" value="TreeGrafter"/>
</dbReference>
<dbReference type="GO" id="GO:0003735">
    <property type="term" value="F:structural constituent of ribosome"/>
    <property type="evidence" value="ECO:0007669"/>
    <property type="project" value="InterPro"/>
</dbReference>
<dbReference type="GO" id="GO:0006412">
    <property type="term" value="P:translation"/>
    <property type="evidence" value="ECO:0007669"/>
    <property type="project" value="UniProtKB-UniRule"/>
</dbReference>
<dbReference type="FunFam" id="2.20.28.120:FF:000001">
    <property type="entry name" value="50S ribosomal protein L33"/>
    <property type="match status" value="1"/>
</dbReference>
<dbReference type="Gene3D" id="2.20.28.120">
    <property type="entry name" value="Ribosomal protein L33"/>
    <property type="match status" value="1"/>
</dbReference>
<dbReference type="HAMAP" id="MF_00294">
    <property type="entry name" value="Ribosomal_bL33"/>
    <property type="match status" value="1"/>
</dbReference>
<dbReference type="InterPro" id="IPR001705">
    <property type="entry name" value="Ribosomal_bL33"/>
</dbReference>
<dbReference type="InterPro" id="IPR018264">
    <property type="entry name" value="Ribosomal_bL33_CS"/>
</dbReference>
<dbReference type="InterPro" id="IPR038584">
    <property type="entry name" value="Ribosomal_bL33_sf"/>
</dbReference>
<dbReference type="InterPro" id="IPR011332">
    <property type="entry name" value="Ribosomal_zn-bd"/>
</dbReference>
<dbReference type="NCBIfam" id="NF001860">
    <property type="entry name" value="PRK00595.1"/>
    <property type="match status" value="1"/>
</dbReference>
<dbReference type="NCBIfam" id="TIGR01023">
    <property type="entry name" value="rpmG_bact"/>
    <property type="match status" value="1"/>
</dbReference>
<dbReference type="PANTHER" id="PTHR15238">
    <property type="entry name" value="54S RIBOSOMAL PROTEIN L39, MITOCHONDRIAL"/>
    <property type="match status" value="1"/>
</dbReference>
<dbReference type="PANTHER" id="PTHR15238:SF1">
    <property type="entry name" value="LARGE RIBOSOMAL SUBUNIT PROTEIN BL33M"/>
    <property type="match status" value="1"/>
</dbReference>
<dbReference type="Pfam" id="PF00471">
    <property type="entry name" value="Ribosomal_L33"/>
    <property type="match status" value="1"/>
</dbReference>
<dbReference type="SUPFAM" id="SSF57829">
    <property type="entry name" value="Zn-binding ribosomal proteins"/>
    <property type="match status" value="1"/>
</dbReference>
<dbReference type="PROSITE" id="PS00582">
    <property type="entry name" value="RIBOSOMAL_L33"/>
    <property type="match status" value="1"/>
</dbReference>
<proteinExistence type="inferred from homology"/>
<accession>A1SR13</accession>
<name>RL33_PSYIN</name>
<evidence type="ECO:0000255" key="1">
    <source>
        <dbReference type="HAMAP-Rule" id="MF_00294"/>
    </source>
</evidence>
<evidence type="ECO:0000256" key="2">
    <source>
        <dbReference type="SAM" id="MobiDB-lite"/>
    </source>
</evidence>
<evidence type="ECO:0000305" key="3"/>
<gene>
    <name evidence="1" type="primary">rpmG</name>
    <name type="ordered locus">Ping_0054</name>
</gene>
<protein>
    <recommendedName>
        <fullName evidence="1">Large ribosomal subunit protein bL33</fullName>
    </recommendedName>
    <alternativeName>
        <fullName evidence="3">50S ribosomal protein L33</fullName>
    </alternativeName>
</protein>
<organism>
    <name type="scientific">Psychromonas ingrahamii (strain DSM 17664 / CCUG 51855 / 37)</name>
    <dbReference type="NCBI Taxonomy" id="357804"/>
    <lineage>
        <taxon>Bacteria</taxon>
        <taxon>Pseudomonadati</taxon>
        <taxon>Pseudomonadota</taxon>
        <taxon>Gammaproteobacteria</taxon>
        <taxon>Alteromonadales</taxon>
        <taxon>Psychromonadaceae</taxon>
        <taxon>Psychromonas</taxon>
    </lineage>
</organism>
<feature type="chain" id="PRO_0000356622" description="Large ribosomal subunit protein bL33">
    <location>
        <begin position="1"/>
        <end position="51"/>
    </location>
</feature>
<feature type="region of interest" description="Disordered" evidence="2">
    <location>
        <begin position="1"/>
        <end position="20"/>
    </location>
</feature>
<reference key="1">
    <citation type="journal article" date="2008" name="BMC Genomics">
        <title>Genomics of an extreme psychrophile, Psychromonas ingrahamii.</title>
        <authorList>
            <person name="Riley M."/>
            <person name="Staley J.T."/>
            <person name="Danchin A."/>
            <person name="Wang T.Z."/>
            <person name="Brettin T.S."/>
            <person name="Hauser L.J."/>
            <person name="Land M.L."/>
            <person name="Thompson L.S."/>
        </authorList>
    </citation>
    <scope>NUCLEOTIDE SEQUENCE [LARGE SCALE GENOMIC DNA]</scope>
    <source>
        <strain>DSM 17664 / CCUG 51855 / 37</strain>
    </source>
</reference>
<comment type="similarity">
    <text evidence="1">Belongs to the bacterial ribosomal protein bL33 family.</text>
</comment>
<keyword id="KW-1185">Reference proteome</keyword>
<keyword id="KW-0687">Ribonucleoprotein</keyword>
<keyword id="KW-0689">Ribosomal protein</keyword>